<evidence type="ECO:0000250" key="1"/>
<evidence type="ECO:0000269" key="2">
    <source>
    </source>
</evidence>
<evidence type="ECO:0000305" key="3"/>
<protein>
    <recommendedName>
        <fullName>Brevinin-1DYc</fullName>
    </recommendedName>
</protein>
<organism>
    <name type="scientific">Rana dybowskii</name>
    <name type="common">Dybovsky's frog</name>
    <name type="synonym">Korean brown frog</name>
    <dbReference type="NCBI Taxonomy" id="71582"/>
    <lineage>
        <taxon>Eukaryota</taxon>
        <taxon>Metazoa</taxon>
        <taxon>Chordata</taxon>
        <taxon>Craniata</taxon>
        <taxon>Vertebrata</taxon>
        <taxon>Euteleostomi</taxon>
        <taxon>Amphibia</taxon>
        <taxon>Batrachia</taxon>
        <taxon>Anura</taxon>
        <taxon>Neobatrachia</taxon>
        <taxon>Ranoidea</taxon>
        <taxon>Ranidae</taxon>
        <taxon>Rana</taxon>
        <taxon>Rana</taxon>
    </lineage>
</organism>
<reference key="1">
    <citation type="journal article" date="2007" name="Toxicon">
        <title>Cytolytic peptides belonging to the brevinin-1 and brevinin-2 families isolated from the skin of the Japanese brown frog, Rana dybowskii.</title>
        <authorList>
            <person name="Conlon J.M."/>
            <person name="Kolodziejek J."/>
            <person name="Nowotny N."/>
            <person name="Leprince J."/>
            <person name="Vaudry H."/>
            <person name="Coquet L."/>
            <person name="Jouenne T."/>
            <person name="Iwamuro S."/>
        </authorList>
    </citation>
    <scope>PROTEIN SEQUENCE</scope>
    <scope>FUNCTION</scope>
    <scope>MASS SPECTROMETRY</scope>
    <source>
        <tissue>Skin secretion</tissue>
    </source>
</reference>
<dbReference type="GO" id="GO:0005576">
    <property type="term" value="C:extracellular region"/>
    <property type="evidence" value="ECO:0007669"/>
    <property type="project" value="UniProtKB-SubCell"/>
</dbReference>
<dbReference type="GO" id="GO:0042742">
    <property type="term" value="P:defense response to bacterium"/>
    <property type="evidence" value="ECO:0007669"/>
    <property type="project" value="UniProtKB-KW"/>
</dbReference>
<dbReference type="GO" id="GO:0031640">
    <property type="term" value="P:killing of cells of another organism"/>
    <property type="evidence" value="ECO:0007669"/>
    <property type="project" value="UniProtKB-KW"/>
</dbReference>
<dbReference type="InterPro" id="IPR012520">
    <property type="entry name" value="Antimicrobial_frog_1"/>
</dbReference>
<dbReference type="Pfam" id="PF08018">
    <property type="entry name" value="Antimicrobial_1"/>
    <property type="match status" value="1"/>
</dbReference>
<comment type="function">
    <text evidence="2">Antimicrobial peptide. Has low activity against the Gram-positive bacterium S.aureus and the Gram-negative bacterium E.coli (MIC&lt;15 uM). Has a strong hemolytic activity.</text>
</comment>
<comment type="subcellular location">
    <subcellularLocation>
        <location>Secreted</location>
    </subcellularLocation>
</comment>
<comment type="tissue specificity">
    <text>Expressed by the skin glands.</text>
</comment>
<comment type="mass spectrometry" mass="2274.3" method="MALDI" evidence="2"/>
<comment type="similarity">
    <text evidence="3">Belongs to the frog skin active peptide (FSAP) family. Brevinin subfamily.</text>
</comment>
<keyword id="KW-0878">Amphibian defense peptide</keyword>
<keyword id="KW-0044">Antibiotic</keyword>
<keyword id="KW-0929">Antimicrobial</keyword>
<keyword id="KW-0204">Cytolysis</keyword>
<keyword id="KW-0903">Direct protein sequencing</keyword>
<keyword id="KW-1015">Disulfide bond</keyword>
<keyword id="KW-0354">Hemolysis</keyword>
<keyword id="KW-0964">Secreted</keyword>
<feature type="peptide" id="PRO_0000311596" description="Brevinin-1DYc">
    <location>
        <begin position="1"/>
        <end position="20"/>
    </location>
</feature>
<feature type="disulfide bond" evidence="1">
    <location>
        <begin position="14"/>
        <end position="20"/>
    </location>
</feature>
<name>BR1C_RANDY</name>
<accession>P0C5W8</accession>
<proteinExistence type="evidence at protein level"/>
<sequence length="20" mass="2278">FLPLLLAGLPKLLCLFFKKC</sequence>